<protein>
    <recommendedName>
        <fullName evidence="1">Undecaprenyl-phosphate alpha-N-acetylglucosaminyl 1-phosphate transferase</fullName>
        <ecNumber evidence="1">2.7.8.33</ecNumber>
    </recommendedName>
    <alternativeName>
        <fullName evidence="1">UDP-GlcNAc:undecaprenyl-phosphate GlcNAc-1-phosphate transferase</fullName>
    </alternativeName>
    <alternativeName>
        <fullName evidence="1">Undecaprenyl-phosphate GlcNAc-1-phosphate transferase</fullName>
    </alternativeName>
</protein>
<name>WECA_PASMU</name>
<dbReference type="EC" id="2.7.8.33" evidence="1"/>
<dbReference type="EMBL" id="AE004439">
    <property type="protein sequence ID" value="AAK02547.1"/>
    <property type="molecule type" value="Genomic_DNA"/>
</dbReference>
<dbReference type="RefSeq" id="WP_005751351.1">
    <property type="nucleotide sequence ID" value="NC_002663.1"/>
</dbReference>
<dbReference type="SMR" id="Q9CNG8"/>
<dbReference type="STRING" id="272843.PM0463"/>
<dbReference type="EnsemblBacteria" id="AAK02547">
    <property type="protein sequence ID" value="AAK02547"/>
    <property type="gene ID" value="PM0463"/>
</dbReference>
<dbReference type="GeneID" id="77208220"/>
<dbReference type="KEGG" id="pmu:PM0463"/>
<dbReference type="HOGENOM" id="CLU_023982_1_0_6"/>
<dbReference type="OrthoDB" id="9783652at2"/>
<dbReference type="UniPathway" id="UPA00281"/>
<dbReference type="Proteomes" id="UP000000809">
    <property type="component" value="Chromosome"/>
</dbReference>
<dbReference type="GO" id="GO:0009276">
    <property type="term" value="C:Gram-negative-bacterium-type cell wall"/>
    <property type="evidence" value="ECO:0000250"/>
    <property type="project" value="UniProtKB"/>
</dbReference>
<dbReference type="GO" id="GO:0005886">
    <property type="term" value="C:plasma membrane"/>
    <property type="evidence" value="ECO:0007669"/>
    <property type="project" value="UniProtKB-SubCell"/>
</dbReference>
<dbReference type="GO" id="GO:0016757">
    <property type="term" value="F:glycosyltransferase activity"/>
    <property type="evidence" value="ECO:0007669"/>
    <property type="project" value="UniProtKB-KW"/>
</dbReference>
<dbReference type="GO" id="GO:0000287">
    <property type="term" value="F:magnesium ion binding"/>
    <property type="evidence" value="ECO:0000250"/>
    <property type="project" value="UniProtKB"/>
</dbReference>
<dbReference type="GO" id="GO:0030145">
    <property type="term" value="F:manganese ion binding"/>
    <property type="evidence" value="ECO:0000250"/>
    <property type="project" value="UniProtKB"/>
</dbReference>
<dbReference type="GO" id="GO:0016780">
    <property type="term" value="F:phosphotransferase activity, for other substituted phosphate groups"/>
    <property type="evidence" value="ECO:0000250"/>
    <property type="project" value="UniProtKB"/>
</dbReference>
<dbReference type="GO" id="GO:0036380">
    <property type="term" value="F:UDP-N-acetylglucosamine-undecaprenyl-phosphate N-acetylglucosaminephosphotransferase activity"/>
    <property type="evidence" value="ECO:0007669"/>
    <property type="project" value="UniProtKB-UniRule"/>
</dbReference>
<dbReference type="GO" id="GO:0044038">
    <property type="term" value="P:cell wall macromolecule biosynthetic process"/>
    <property type="evidence" value="ECO:0000250"/>
    <property type="project" value="UniProtKB"/>
</dbReference>
<dbReference type="GO" id="GO:0071555">
    <property type="term" value="P:cell wall organization"/>
    <property type="evidence" value="ECO:0000250"/>
    <property type="project" value="UniProtKB"/>
</dbReference>
<dbReference type="GO" id="GO:0009103">
    <property type="term" value="P:lipopolysaccharide biosynthetic process"/>
    <property type="evidence" value="ECO:0000250"/>
    <property type="project" value="UniProtKB"/>
</dbReference>
<dbReference type="GO" id="GO:0009243">
    <property type="term" value="P:O antigen biosynthetic process"/>
    <property type="evidence" value="ECO:0007669"/>
    <property type="project" value="UniProtKB-UniRule"/>
</dbReference>
<dbReference type="CDD" id="cd06853">
    <property type="entry name" value="GT_WecA_like"/>
    <property type="match status" value="1"/>
</dbReference>
<dbReference type="HAMAP" id="MF_02030">
    <property type="entry name" value="WecA_Gammaproteo"/>
    <property type="match status" value="1"/>
</dbReference>
<dbReference type="InterPro" id="IPR012750">
    <property type="entry name" value="ECA_WecA-rel"/>
</dbReference>
<dbReference type="InterPro" id="IPR000715">
    <property type="entry name" value="Glycosyl_transferase_4"/>
</dbReference>
<dbReference type="InterPro" id="IPR018480">
    <property type="entry name" value="PNAcMuramoyl-5peptid_Trfase_CS"/>
</dbReference>
<dbReference type="NCBIfam" id="TIGR02380">
    <property type="entry name" value="ECA_wecA"/>
    <property type="match status" value="1"/>
</dbReference>
<dbReference type="PANTHER" id="PTHR22926">
    <property type="entry name" value="PHOSPHO-N-ACETYLMURAMOYL-PENTAPEPTIDE-TRANSFERASE"/>
    <property type="match status" value="1"/>
</dbReference>
<dbReference type="PANTHER" id="PTHR22926:SF3">
    <property type="entry name" value="UNDECAPRENYL-PHOSPHATE ALPHA-N-ACETYLGLUCOSAMINYL 1-PHOSPHATE TRANSFERASE"/>
    <property type="match status" value="1"/>
</dbReference>
<dbReference type="Pfam" id="PF00953">
    <property type="entry name" value="Glycos_transf_4"/>
    <property type="match status" value="1"/>
</dbReference>
<organism>
    <name type="scientific">Pasteurella multocida (strain Pm70)</name>
    <dbReference type="NCBI Taxonomy" id="272843"/>
    <lineage>
        <taxon>Bacteria</taxon>
        <taxon>Pseudomonadati</taxon>
        <taxon>Pseudomonadota</taxon>
        <taxon>Gammaproteobacteria</taxon>
        <taxon>Pasteurellales</taxon>
        <taxon>Pasteurellaceae</taxon>
        <taxon>Pasteurella</taxon>
    </lineage>
</organism>
<feature type="chain" id="PRO_0000108949" description="Undecaprenyl-phosphate alpha-N-acetylglucosaminyl 1-phosphate transferase">
    <location>
        <begin position="1"/>
        <end position="357"/>
    </location>
</feature>
<feature type="transmembrane region" description="Helical" evidence="1">
    <location>
        <begin position="40"/>
        <end position="60"/>
    </location>
</feature>
<feature type="transmembrane region" description="Helical" evidence="1">
    <location>
        <begin position="64"/>
        <end position="84"/>
    </location>
</feature>
<feature type="transmembrane region" description="Helical" evidence="1">
    <location>
        <begin position="124"/>
        <end position="144"/>
    </location>
</feature>
<feature type="transmembrane region" description="Helical" evidence="1">
    <location>
        <begin position="183"/>
        <end position="203"/>
    </location>
</feature>
<feature type="transmembrane region" description="Helical" evidence="1">
    <location>
        <begin position="209"/>
        <end position="229"/>
    </location>
</feature>
<feature type="transmembrane region" description="Helical" evidence="1">
    <location>
        <begin position="238"/>
        <end position="258"/>
    </location>
</feature>
<feature type="transmembrane region" description="Helical" evidence="1">
    <location>
        <begin position="291"/>
        <end position="311"/>
    </location>
</feature>
<reference key="1">
    <citation type="journal article" date="2001" name="Proc. Natl. Acad. Sci. U.S.A.">
        <title>Complete genomic sequence of Pasteurella multocida Pm70.</title>
        <authorList>
            <person name="May B.J."/>
            <person name="Zhang Q."/>
            <person name="Li L.L."/>
            <person name="Paustian M.L."/>
            <person name="Whittam T.S."/>
            <person name="Kapur V."/>
        </authorList>
    </citation>
    <scope>NUCLEOTIDE SEQUENCE [LARGE SCALE GENOMIC DNA]</scope>
    <source>
        <strain>Pm70</strain>
    </source>
</reference>
<evidence type="ECO:0000255" key="1">
    <source>
        <dbReference type="HAMAP-Rule" id="MF_02030"/>
    </source>
</evidence>
<proteinExistence type="inferred from homology"/>
<keyword id="KW-0997">Cell inner membrane</keyword>
<keyword id="KW-1003">Cell membrane</keyword>
<keyword id="KW-0328">Glycosyltransferase</keyword>
<keyword id="KW-0448">Lipopolysaccharide biosynthesis</keyword>
<keyword id="KW-0460">Magnesium</keyword>
<keyword id="KW-0464">Manganese</keyword>
<keyword id="KW-0472">Membrane</keyword>
<keyword id="KW-1185">Reference proteome</keyword>
<keyword id="KW-0808">Transferase</keyword>
<keyword id="KW-0812">Transmembrane</keyword>
<keyword id="KW-1133">Transmembrane helix</keyword>
<comment type="function">
    <text evidence="1">Catalyzes the transfer of the GlcNAc-1-phosphate moiety from UDP-GlcNAc onto the carrier lipid undecaprenyl phosphate (C55-P), yielding GlcNAc-pyrophosphoryl-undecaprenyl (GlcNAc-PP-C55).</text>
</comment>
<comment type="catalytic activity">
    <reaction evidence="1">
        <text>di-trans,octa-cis-undecaprenyl phosphate + UDP-N-acetyl-alpha-D-glucosamine = N-acetyl-alpha-D-glucosaminyl-di-trans,octa-cis-undecaprenyl diphosphate + UMP</text>
        <dbReference type="Rhea" id="RHEA:28090"/>
        <dbReference type="ChEBI" id="CHEBI:57705"/>
        <dbReference type="ChEBI" id="CHEBI:57865"/>
        <dbReference type="ChEBI" id="CHEBI:60392"/>
        <dbReference type="ChEBI" id="CHEBI:62959"/>
        <dbReference type="EC" id="2.7.8.33"/>
    </reaction>
</comment>
<comment type="cofactor">
    <cofactor evidence="1">
        <name>Mg(2+)</name>
        <dbReference type="ChEBI" id="CHEBI:18420"/>
    </cofactor>
</comment>
<comment type="cofactor">
    <cofactor evidence="1">
        <name>Mn(2+)</name>
        <dbReference type="ChEBI" id="CHEBI:29035"/>
    </cofactor>
</comment>
<comment type="pathway">
    <text evidence="1">Bacterial outer membrane biogenesis; LPS O-antigen biosynthesis.</text>
</comment>
<comment type="subcellular location">
    <subcellularLocation>
        <location evidence="1">Cell inner membrane</location>
        <topology evidence="1">Multi-pass membrane protein</topology>
    </subcellularLocation>
</comment>
<comment type="similarity">
    <text evidence="1">Belongs to the glycosyltransferase 4 family. WecA subfamily.</text>
</comment>
<sequence>MLLSLIVTFLGAFLTLLFMRPIAQKIGLVDKPNFRKRHQGAIPLIGGVSLFVGNLCFYLLEWEQMRLPTLYLFSIFVLLVIGMIDDRFDISPFLRAGIQAILAILMIDLGNLYLDHLGQILGPFQLTLGSIGLIITVLATIAAINAFNMIDGIDGLLGGLSSVAFVSIGILLIKDNQLDLAYWSFALIIAILPYFMMNLGIPFGQKFKVFMGDAGSTLIGFTIIWILLLSTQGKGHPMNPVTALWIIAIPLIDMIAIMYRRLRKGKSPFRPDRLHVHHLMMRAGLTSRQAFLLITFAAAICATIGILGEIFYINEWLMFAGFILLFFMYSYSITRAWRITRWIRRMRRRAKRIHNKG</sequence>
<gene>
    <name evidence="1" type="primary">wecA</name>
    <name type="synonym">rfe</name>
    <name type="ordered locus">PM0463</name>
</gene>
<accession>Q9CNG8</accession>